<accession>O55038</accession>
<protein>
    <recommendedName>
        <fullName>C-X-C motif chemokine 13</fullName>
    </recommendedName>
    <alternativeName>
        <fullName>B lymphocyte chemoattractant</fullName>
    </alternativeName>
    <alternativeName>
        <fullName>CXC chemokine BLC</fullName>
    </alternativeName>
    <alternativeName>
        <fullName>Small-inducible cytokine B13</fullName>
    </alternativeName>
</protein>
<gene>
    <name type="primary">Cxcl13</name>
    <name type="synonym">Blc</name>
    <name type="synonym">Scyb13</name>
</gene>
<comment type="function">
    <text>Strongly chemotactic for B-lymphocytes, weakly for spleen monocytes and macrophages but no chemotactic activity for granulocytes. Binds to BLR1/CXCR5. May play a role in directing the migration of B-lymphocytes to follicles in secondary lymphoid organs.</text>
</comment>
<comment type="subcellular location">
    <subcellularLocation>
        <location>Secreted</location>
    </subcellularLocation>
</comment>
<comment type="tissue specificity">
    <text>Found in spleen (B-cell-rich zone or follicles), Peyer patches (strongest within germinal centers and extending to the mantle zone) and lymph nodes (in reticular pattern in follicles).</text>
</comment>
<comment type="similarity">
    <text evidence="3">Belongs to the intercrine alpha (chemokine CxC) family.</text>
</comment>
<organism>
    <name type="scientific">Mus musculus</name>
    <name type="common">Mouse</name>
    <dbReference type="NCBI Taxonomy" id="10090"/>
    <lineage>
        <taxon>Eukaryota</taxon>
        <taxon>Metazoa</taxon>
        <taxon>Chordata</taxon>
        <taxon>Craniata</taxon>
        <taxon>Vertebrata</taxon>
        <taxon>Euteleostomi</taxon>
        <taxon>Mammalia</taxon>
        <taxon>Eutheria</taxon>
        <taxon>Euarchontoglires</taxon>
        <taxon>Glires</taxon>
        <taxon>Rodentia</taxon>
        <taxon>Myomorpha</taxon>
        <taxon>Muroidea</taxon>
        <taxon>Muridae</taxon>
        <taxon>Murinae</taxon>
        <taxon>Mus</taxon>
        <taxon>Mus</taxon>
    </lineage>
</organism>
<name>CXL13_MOUSE</name>
<dbReference type="EMBL" id="AF044196">
    <property type="protein sequence ID" value="AAC14401.1"/>
    <property type="molecule type" value="mRNA"/>
</dbReference>
<dbReference type="EMBL" id="BC012965">
    <property type="protein sequence ID" value="AAH12965.1"/>
    <property type="molecule type" value="mRNA"/>
</dbReference>
<dbReference type="CCDS" id="CCDS19447.1"/>
<dbReference type="RefSeq" id="NP_061354.1">
    <property type="nucleotide sequence ID" value="NM_018866.3"/>
</dbReference>
<dbReference type="PDB" id="5IZB">
    <property type="method" value="NMR"/>
    <property type="chains" value="A=22-109"/>
</dbReference>
<dbReference type="PDB" id="5L7M">
    <property type="method" value="NMR"/>
    <property type="chains" value="A=22-109"/>
</dbReference>
<dbReference type="PDBsum" id="5IZB"/>
<dbReference type="PDBsum" id="5L7M"/>
<dbReference type="BMRB" id="O55038"/>
<dbReference type="SMR" id="O55038"/>
<dbReference type="DIP" id="DIP-57395N"/>
<dbReference type="FunCoup" id="O55038">
    <property type="interactions" value="972"/>
</dbReference>
<dbReference type="IntAct" id="O55038">
    <property type="interactions" value="4"/>
</dbReference>
<dbReference type="MINT" id="O55038"/>
<dbReference type="STRING" id="10090.ENSMUSP00000023840"/>
<dbReference type="iPTMnet" id="O55038"/>
<dbReference type="PhosphoSitePlus" id="O55038"/>
<dbReference type="PaxDb" id="10090-ENSMUSP00000023840"/>
<dbReference type="ProteomicsDB" id="277932"/>
<dbReference type="Antibodypedia" id="13544">
    <property type="antibodies" value="591 antibodies from 40 providers"/>
</dbReference>
<dbReference type="DNASU" id="55985"/>
<dbReference type="Ensembl" id="ENSMUST00000023840.7">
    <property type="protein sequence ID" value="ENSMUSP00000023840.6"/>
    <property type="gene ID" value="ENSMUSG00000023078.7"/>
</dbReference>
<dbReference type="GeneID" id="55985"/>
<dbReference type="KEGG" id="mmu:55985"/>
<dbReference type="UCSC" id="uc008yfb.1">
    <property type="organism name" value="mouse"/>
</dbReference>
<dbReference type="AGR" id="MGI:1888499"/>
<dbReference type="CTD" id="10563"/>
<dbReference type="MGI" id="MGI:1888499">
    <property type="gene designation" value="Cxcl13"/>
</dbReference>
<dbReference type="VEuPathDB" id="HostDB:ENSMUSG00000023078"/>
<dbReference type="eggNOG" id="ENOG502SEXJ">
    <property type="taxonomic scope" value="Eukaryota"/>
</dbReference>
<dbReference type="GeneTree" id="ENSGT00530000064292"/>
<dbReference type="HOGENOM" id="CLU_143902_2_0_1"/>
<dbReference type="InParanoid" id="O55038"/>
<dbReference type="OMA" id="NCRCVKT"/>
<dbReference type="OrthoDB" id="9937393at2759"/>
<dbReference type="PhylomeDB" id="O55038"/>
<dbReference type="TreeFam" id="TF335204"/>
<dbReference type="Reactome" id="R-MMU-380108">
    <property type="pathway name" value="Chemokine receptors bind chemokines"/>
</dbReference>
<dbReference type="Reactome" id="R-MMU-418594">
    <property type="pathway name" value="G alpha (i) signalling events"/>
</dbReference>
<dbReference type="BioGRID-ORCS" id="55985">
    <property type="hits" value="2 hits in 79 CRISPR screens"/>
</dbReference>
<dbReference type="PRO" id="PR:O55038"/>
<dbReference type="Proteomes" id="UP000000589">
    <property type="component" value="Chromosome 5"/>
</dbReference>
<dbReference type="RNAct" id="O55038">
    <property type="molecule type" value="protein"/>
</dbReference>
<dbReference type="Bgee" id="ENSMUSG00000023078">
    <property type="expression patterns" value="Expressed in peripheral lymph node and 134 other cell types or tissues"/>
</dbReference>
<dbReference type="ExpressionAtlas" id="O55038">
    <property type="expression patterns" value="baseline and differential"/>
</dbReference>
<dbReference type="GO" id="GO:0005576">
    <property type="term" value="C:extracellular region"/>
    <property type="evidence" value="ECO:0000250"/>
    <property type="project" value="BHF-UCL"/>
</dbReference>
<dbReference type="GO" id="GO:0005615">
    <property type="term" value="C:extracellular space"/>
    <property type="evidence" value="ECO:0000314"/>
    <property type="project" value="MGI"/>
</dbReference>
<dbReference type="GO" id="GO:0031735">
    <property type="term" value="F:CCR10 chemokine receptor binding"/>
    <property type="evidence" value="ECO:0000250"/>
    <property type="project" value="BHF-UCL"/>
</dbReference>
<dbReference type="GO" id="GO:0008009">
    <property type="term" value="F:chemokine activity"/>
    <property type="evidence" value="ECO:0000314"/>
    <property type="project" value="BHF-UCL"/>
</dbReference>
<dbReference type="GO" id="GO:0048248">
    <property type="term" value="F:CXCR3 chemokine receptor binding"/>
    <property type="evidence" value="ECO:0000250"/>
    <property type="project" value="BHF-UCL"/>
</dbReference>
<dbReference type="GO" id="GO:0031724">
    <property type="term" value="F:CXCR5 chemokine receptor binding"/>
    <property type="evidence" value="ECO:0000314"/>
    <property type="project" value="BHF-UCL"/>
</dbReference>
<dbReference type="GO" id="GO:0017134">
    <property type="term" value="F:fibroblast growth factor binding"/>
    <property type="evidence" value="ECO:0000250"/>
    <property type="project" value="BHF-UCL"/>
</dbReference>
<dbReference type="GO" id="GO:0008201">
    <property type="term" value="F:heparin binding"/>
    <property type="evidence" value="ECO:0000250"/>
    <property type="project" value="BHF-UCL"/>
</dbReference>
<dbReference type="GO" id="GO:0048018">
    <property type="term" value="F:receptor ligand activity"/>
    <property type="evidence" value="ECO:0000250"/>
    <property type="project" value="BHF-UCL"/>
</dbReference>
<dbReference type="GO" id="GO:0035754">
    <property type="term" value="P:B cell chemotaxis"/>
    <property type="evidence" value="ECO:0000315"/>
    <property type="project" value="BHF-UCL"/>
</dbReference>
<dbReference type="GO" id="GO:0035769">
    <property type="term" value="P:B cell chemotaxis across high endothelial venule"/>
    <property type="evidence" value="ECO:0000314"/>
    <property type="project" value="BHF-UCL"/>
</dbReference>
<dbReference type="GO" id="GO:0007267">
    <property type="term" value="P:cell-cell signaling"/>
    <property type="evidence" value="ECO:0000250"/>
    <property type="project" value="BHF-UCL"/>
</dbReference>
<dbReference type="GO" id="GO:0070098">
    <property type="term" value="P:chemokine-mediated signaling pathway"/>
    <property type="evidence" value="ECO:0000314"/>
    <property type="project" value="BHF-UCL"/>
</dbReference>
<dbReference type="GO" id="GO:0042742">
    <property type="term" value="P:defense response to bacterium"/>
    <property type="evidence" value="ECO:0000250"/>
    <property type="project" value="BHF-UCL"/>
</dbReference>
<dbReference type="GO" id="GO:0035768">
    <property type="term" value="P:endothelial cell chemotaxis to fibroblast growth factor"/>
    <property type="evidence" value="ECO:0000250"/>
    <property type="project" value="BHF-UCL"/>
</dbReference>
<dbReference type="GO" id="GO:0006955">
    <property type="term" value="P:immune response"/>
    <property type="evidence" value="ECO:0007669"/>
    <property type="project" value="InterPro"/>
</dbReference>
<dbReference type="GO" id="GO:0006954">
    <property type="term" value="P:inflammatory response"/>
    <property type="evidence" value="ECO:0007669"/>
    <property type="project" value="UniProtKB-KW"/>
</dbReference>
<dbReference type="GO" id="GO:0048535">
    <property type="term" value="P:lymph node development"/>
    <property type="evidence" value="ECO:0000314"/>
    <property type="project" value="BHF-UCL"/>
</dbReference>
<dbReference type="GO" id="GO:0002518">
    <property type="term" value="P:lymphocyte chemotaxis across high endothelial venule"/>
    <property type="evidence" value="ECO:0000315"/>
    <property type="project" value="BHF-UCL"/>
</dbReference>
<dbReference type="GO" id="GO:0033634">
    <property type="term" value="P:positive regulation of cell-cell adhesion mediated by integrin"/>
    <property type="evidence" value="ECO:0000314"/>
    <property type="project" value="BHF-UCL"/>
</dbReference>
<dbReference type="GO" id="GO:0007204">
    <property type="term" value="P:positive regulation of cytosolic calcium ion concentration"/>
    <property type="evidence" value="ECO:0000250"/>
    <property type="project" value="BHF-UCL"/>
</dbReference>
<dbReference type="GO" id="GO:0033625">
    <property type="term" value="P:positive regulation of integrin activation"/>
    <property type="evidence" value="ECO:0000314"/>
    <property type="project" value="BHF-UCL"/>
</dbReference>
<dbReference type="GO" id="GO:0010820">
    <property type="term" value="P:positive regulation of T cell chemotaxis"/>
    <property type="evidence" value="ECO:0000250"/>
    <property type="project" value="BHF-UCL"/>
</dbReference>
<dbReference type="GO" id="GO:0032487">
    <property type="term" value="P:regulation of Rap protein signal transduction"/>
    <property type="evidence" value="ECO:0000314"/>
    <property type="project" value="BHF-UCL"/>
</dbReference>
<dbReference type="CDD" id="cd00273">
    <property type="entry name" value="Chemokine_CXC"/>
    <property type="match status" value="1"/>
</dbReference>
<dbReference type="FunFam" id="2.40.50.40:FF:000004">
    <property type="entry name" value="C-X-C motif chemokine"/>
    <property type="match status" value="1"/>
</dbReference>
<dbReference type="Gene3D" id="2.40.50.40">
    <property type="match status" value="1"/>
</dbReference>
<dbReference type="InterPro" id="IPR039809">
    <property type="entry name" value="Chemokine_b/g/d"/>
</dbReference>
<dbReference type="InterPro" id="IPR001089">
    <property type="entry name" value="Chemokine_CXC"/>
</dbReference>
<dbReference type="InterPro" id="IPR018048">
    <property type="entry name" value="Chemokine_CXC_CS"/>
</dbReference>
<dbReference type="InterPro" id="IPR001811">
    <property type="entry name" value="Chemokine_IL8-like_dom"/>
</dbReference>
<dbReference type="InterPro" id="IPR033899">
    <property type="entry name" value="CXC_Chemokine_domain"/>
</dbReference>
<dbReference type="InterPro" id="IPR036048">
    <property type="entry name" value="Interleukin_8-like_sf"/>
</dbReference>
<dbReference type="PANTHER" id="PTHR12015:SF204">
    <property type="entry name" value="C-X-C MOTIF CHEMOKINE 13"/>
    <property type="match status" value="1"/>
</dbReference>
<dbReference type="PANTHER" id="PTHR12015">
    <property type="entry name" value="SMALL INDUCIBLE CYTOKINE A"/>
    <property type="match status" value="1"/>
</dbReference>
<dbReference type="Pfam" id="PF00048">
    <property type="entry name" value="IL8"/>
    <property type="match status" value="1"/>
</dbReference>
<dbReference type="PRINTS" id="PR00437">
    <property type="entry name" value="SMALLCYTKCXC"/>
</dbReference>
<dbReference type="SMART" id="SM00199">
    <property type="entry name" value="SCY"/>
    <property type="match status" value="1"/>
</dbReference>
<dbReference type="SUPFAM" id="SSF54117">
    <property type="entry name" value="Interleukin 8-like chemokines"/>
    <property type="match status" value="1"/>
</dbReference>
<dbReference type="PROSITE" id="PS00471">
    <property type="entry name" value="SMALL_CYTOKINES_CXC"/>
    <property type="match status" value="1"/>
</dbReference>
<feature type="signal peptide" evidence="2">
    <location>
        <begin position="1"/>
        <end position="21"/>
    </location>
</feature>
<feature type="chain" id="PRO_0000005114" description="C-X-C motif chemokine 13">
    <location>
        <begin position="22"/>
        <end position="109"/>
    </location>
</feature>
<feature type="disulfide bond" evidence="1">
    <location>
        <begin position="32"/>
        <end position="59"/>
    </location>
</feature>
<feature type="disulfide bond" evidence="1">
    <location>
        <begin position="34"/>
        <end position="75"/>
    </location>
</feature>
<feature type="strand" evidence="4">
    <location>
        <begin position="22"/>
        <end position="25"/>
    </location>
</feature>
<feature type="turn" evidence="4">
    <location>
        <begin position="44"/>
        <end position="46"/>
    </location>
</feature>
<feature type="strand" evidence="4">
    <location>
        <begin position="47"/>
        <end position="53"/>
    </location>
</feature>
<feature type="strand" evidence="4">
    <location>
        <begin position="57"/>
        <end position="61"/>
    </location>
</feature>
<feature type="strand" evidence="4">
    <location>
        <begin position="63"/>
        <end position="68"/>
    </location>
</feature>
<feature type="strand" evidence="4">
    <location>
        <begin position="73"/>
        <end position="76"/>
    </location>
</feature>
<feature type="helix" evidence="4">
    <location>
        <begin position="81"/>
        <end position="89"/>
    </location>
</feature>
<proteinExistence type="evidence at protein level"/>
<sequence length="109" mass="11927">MRLSTATLLLLLASCLSPGHGILEAHYTNLKCRCSGVISTVVGLNIIDRIQVTPPGNGCPKTEVVIWTKMKKVICVNPRAKWLQRLLRHVQSKSLSSTPQAPVSKRRAA</sequence>
<evidence type="ECO:0000250" key="1"/>
<evidence type="ECO:0000269" key="2">
    <source>
    </source>
</evidence>
<evidence type="ECO:0000305" key="3"/>
<evidence type="ECO:0007829" key="4">
    <source>
        <dbReference type="PDB" id="5IZB"/>
    </source>
</evidence>
<reference key="1">
    <citation type="journal article" date="1998" name="Nature">
        <title>A B-cell-homing chemokine made in lymphoid follicles activates Burkitt's lymphoma receptor-1.</title>
        <authorList>
            <person name="Gunn M.D."/>
            <person name="Ngo V.N."/>
            <person name="Ansel K.M."/>
            <person name="Ekland E.H."/>
            <person name="Cyster J.G."/>
            <person name="Williams L.T."/>
        </authorList>
    </citation>
    <scope>NUCLEOTIDE SEQUENCE [MRNA]</scope>
    <scope>PROTEIN SEQUENCE OF N-TERMINUS</scope>
    <source>
        <strain>C57BL/6J</strain>
    </source>
</reference>
<reference key="2">
    <citation type="journal article" date="2004" name="Genome Res.">
        <title>The status, quality, and expansion of the NIH full-length cDNA project: the Mammalian Gene Collection (MGC).</title>
        <authorList>
            <consortium name="The MGC Project Team"/>
        </authorList>
    </citation>
    <scope>NUCLEOTIDE SEQUENCE [LARGE SCALE MRNA]</scope>
    <source>
        <strain>FVB/N</strain>
        <tissue>Colon</tissue>
    </source>
</reference>
<keyword id="KW-0002">3D-structure</keyword>
<keyword id="KW-0145">Chemotaxis</keyword>
<keyword id="KW-0202">Cytokine</keyword>
<keyword id="KW-0903">Direct protein sequencing</keyword>
<keyword id="KW-1015">Disulfide bond</keyword>
<keyword id="KW-0395">Inflammatory response</keyword>
<keyword id="KW-1185">Reference proteome</keyword>
<keyword id="KW-0964">Secreted</keyword>
<keyword id="KW-0732">Signal</keyword>